<evidence type="ECO:0000250" key="1">
    <source>
        <dbReference type="UniProtKB" id="P00362"/>
    </source>
</evidence>
<evidence type="ECO:0000250" key="2">
    <source>
        <dbReference type="UniProtKB" id="P25858"/>
    </source>
</evidence>
<evidence type="ECO:0000250" key="3">
    <source>
        <dbReference type="UniProtKB" id="P54226"/>
    </source>
</evidence>
<evidence type="ECO:0000255" key="4">
    <source>
        <dbReference type="PROSITE-ProRule" id="PRU10009"/>
    </source>
</evidence>
<evidence type="ECO:0000269" key="5">
    <source>
    </source>
</evidence>
<evidence type="ECO:0000269" key="6">
    <source>
    </source>
</evidence>
<evidence type="ECO:0000269" key="7">
    <source>
    </source>
</evidence>
<evidence type="ECO:0000303" key="8">
    <source>
    </source>
</evidence>
<evidence type="ECO:0000303" key="9">
    <source>
    </source>
</evidence>
<evidence type="ECO:0000305" key="10"/>
<evidence type="ECO:0000312" key="11">
    <source>
        <dbReference type="Araport" id="AT1G13440"/>
    </source>
</evidence>
<evidence type="ECO:0000312" key="12">
    <source>
        <dbReference type="EMBL" id="AAG09543.1"/>
    </source>
</evidence>
<organism>
    <name type="scientific">Arabidopsis thaliana</name>
    <name type="common">Mouse-ear cress</name>
    <dbReference type="NCBI Taxonomy" id="3702"/>
    <lineage>
        <taxon>Eukaryota</taxon>
        <taxon>Viridiplantae</taxon>
        <taxon>Streptophyta</taxon>
        <taxon>Embryophyta</taxon>
        <taxon>Tracheophyta</taxon>
        <taxon>Spermatophyta</taxon>
        <taxon>Magnoliopsida</taxon>
        <taxon>eudicotyledons</taxon>
        <taxon>Gunneridae</taxon>
        <taxon>Pentapetalae</taxon>
        <taxon>rosids</taxon>
        <taxon>malvids</taxon>
        <taxon>Brassicales</taxon>
        <taxon>Brassicaceae</taxon>
        <taxon>Camelineae</taxon>
        <taxon>Arabidopsis</taxon>
    </lineage>
</organism>
<dbReference type="EC" id="1.2.1.12" evidence="4 5"/>
<dbReference type="EMBL" id="AC011810">
    <property type="protein sequence ID" value="AAG09543.1"/>
    <property type="molecule type" value="Genomic_DNA"/>
</dbReference>
<dbReference type="EMBL" id="CP002684">
    <property type="protein sequence ID" value="AEE29016.1"/>
    <property type="molecule type" value="Genomic_DNA"/>
</dbReference>
<dbReference type="EMBL" id="AF410271">
    <property type="protein sequence ID" value="AAK95257.1"/>
    <property type="molecule type" value="mRNA"/>
</dbReference>
<dbReference type="EMBL" id="AY049259">
    <property type="protein sequence ID" value="AAK83601.1"/>
    <property type="molecule type" value="mRNA"/>
</dbReference>
<dbReference type="EMBL" id="AY090275">
    <property type="protein sequence ID" value="AAL90936.1"/>
    <property type="molecule type" value="mRNA"/>
</dbReference>
<dbReference type="EMBL" id="AK317337">
    <property type="protein sequence ID" value="BAH20011.1"/>
    <property type="molecule type" value="mRNA"/>
</dbReference>
<dbReference type="RefSeq" id="NP_172801.1">
    <molecule id="Q9FX54-1"/>
    <property type="nucleotide sequence ID" value="NM_101214.4"/>
</dbReference>
<dbReference type="SMR" id="Q9FX54"/>
<dbReference type="BioGRID" id="23144">
    <property type="interactions" value="18"/>
</dbReference>
<dbReference type="FunCoup" id="Q9FX54">
    <property type="interactions" value="1060"/>
</dbReference>
<dbReference type="IntAct" id="Q9FX54">
    <property type="interactions" value="2"/>
</dbReference>
<dbReference type="MINT" id="Q9FX54"/>
<dbReference type="STRING" id="3702.Q9FX54"/>
<dbReference type="iPTMnet" id="Q9FX54"/>
<dbReference type="MetOSite" id="Q9FX54"/>
<dbReference type="PaxDb" id="3702-AT1G13440.1"/>
<dbReference type="ProteomicsDB" id="248598">
    <molecule id="Q9FX54-1"/>
</dbReference>
<dbReference type="EnsemblPlants" id="AT1G13440.1">
    <molecule id="Q9FX54-1"/>
    <property type="protein sequence ID" value="AT1G13440.1"/>
    <property type="gene ID" value="AT1G13440"/>
</dbReference>
<dbReference type="GeneID" id="837904"/>
<dbReference type="Gramene" id="AT1G13440.1">
    <molecule id="Q9FX54-1"/>
    <property type="protein sequence ID" value="AT1G13440.1"/>
    <property type="gene ID" value="AT1G13440"/>
</dbReference>
<dbReference type="KEGG" id="ath:AT1G13440"/>
<dbReference type="Araport" id="AT1G13440"/>
<dbReference type="TAIR" id="AT1G13440">
    <property type="gene designation" value="GAPC2"/>
</dbReference>
<dbReference type="eggNOG" id="KOG0657">
    <property type="taxonomic scope" value="Eukaryota"/>
</dbReference>
<dbReference type="HOGENOM" id="CLU_030140_0_3_1"/>
<dbReference type="InParanoid" id="Q9FX54"/>
<dbReference type="OMA" id="NMHITVF"/>
<dbReference type="OrthoDB" id="1152826at2759"/>
<dbReference type="PhylomeDB" id="Q9FX54"/>
<dbReference type="BRENDA" id="1.2.1.12">
    <property type="organism ID" value="399"/>
</dbReference>
<dbReference type="UniPathway" id="UPA00109">
    <property type="reaction ID" value="UER00184"/>
</dbReference>
<dbReference type="CD-CODE" id="4299E36E">
    <property type="entry name" value="Nucleolus"/>
</dbReference>
<dbReference type="PRO" id="PR:Q9FX54"/>
<dbReference type="Proteomes" id="UP000006548">
    <property type="component" value="Chromosome 1"/>
</dbReference>
<dbReference type="ExpressionAtlas" id="Q9FX54">
    <property type="expression patterns" value="baseline and differential"/>
</dbReference>
<dbReference type="GO" id="GO:0009507">
    <property type="term" value="C:chloroplast"/>
    <property type="evidence" value="ECO:0007005"/>
    <property type="project" value="TAIR"/>
</dbReference>
<dbReference type="GO" id="GO:0005829">
    <property type="term" value="C:cytosol"/>
    <property type="evidence" value="ECO:0000314"/>
    <property type="project" value="UniProtKB"/>
</dbReference>
<dbReference type="GO" id="GO:0005576">
    <property type="term" value="C:extracellular region"/>
    <property type="evidence" value="ECO:0007005"/>
    <property type="project" value="TAIR"/>
</dbReference>
<dbReference type="GO" id="GO:0005739">
    <property type="term" value="C:mitochondrion"/>
    <property type="evidence" value="ECO:0000314"/>
    <property type="project" value="TAIR"/>
</dbReference>
<dbReference type="GO" id="GO:0005730">
    <property type="term" value="C:nucleolus"/>
    <property type="evidence" value="ECO:0007005"/>
    <property type="project" value="TAIR"/>
</dbReference>
<dbReference type="GO" id="GO:0005634">
    <property type="term" value="C:nucleus"/>
    <property type="evidence" value="ECO:0000314"/>
    <property type="project" value="UniProtKB"/>
</dbReference>
<dbReference type="GO" id="GO:0005777">
    <property type="term" value="C:peroxisome"/>
    <property type="evidence" value="ECO:0000314"/>
    <property type="project" value="TAIR"/>
</dbReference>
<dbReference type="GO" id="GO:0009505">
    <property type="term" value="C:plant-type cell wall"/>
    <property type="evidence" value="ECO:0007005"/>
    <property type="project" value="TAIR"/>
</dbReference>
<dbReference type="GO" id="GO:0005886">
    <property type="term" value="C:plasma membrane"/>
    <property type="evidence" value="ECO:0007005"/>
    <property type="project" value="TAIR"/>
</dbReference>
<dbReference type="GO" id="GO:0009506">
    <property type="term" value="C:plasmodesma"/>
    <property type="evidence" value="ECO:0007005"/>
    <property type="project" value="TAIR"/>
</dbReference>
<dbReference type="GO" id="GO:0005507">
    <property type="term" value="F:copper ion binding"/>
    <property type="evidence" value="ECO:0007005"/>
    <property type="project" value="TAIR"/>
</dbReference>
<dbReference type="GO" id="GO:0003677">
    <property type="term" value="F:DNA binding"/>
    <property type="evidence" value="ECO:0007669"/>
    <property type="project" value="UniProtKB-KW"/>
</dbReference>
<dbReference type="GO" id="GO:0004365">
    <property type="term" value="F:glyceraldehyde-3-phosphate dehydrogenase (NAD+) (phosphorylating) activity"/>
    <property type="evidence" value="ECO:0000314"/>
    <property type="project" value="UniProtKB"/>
</dbReference>
<dbReference type="GO" id="GO:0051287">
    <property type="term" value="F:NAD binding"/>
    <property type="evidence" value="ECO:0007669"/>
    <property type="project" value="InterPro"/>
</dbReference>
<dbReference type="GO" id="GO:0050661">
    <property type="term" value="F:NADP binding"/>
    <property type="evidence" value="ECO:0007669"/>
    <property type="project" value="InterPro"/>
</dbReference>
<dbReference type="GO" id="GO:1901149">
    <property type="term" value="F:salicylic acid binding"/>
    <property type="evidence" value="ECO:0007005"/>
    <property type="project" value="TAIR"/>
</dbReference>
<dbReference type="GO" id="GO:0008270">
    <property type="term" value="F:zinc ion binding"/>
    <property type="evidence" value="ECO:0007005"/>
    <property type="project" value="TAIR"/>
</dbReference>
<dbReference type="GO" id="GO:0006094">
    <property type="term" value="P:gluconeogenesis"/>
    <property type="evidence" value="ECO:0000304"/>
    <property type="project" value="TAIR"/>
</dbReference>
<dbReference type="GO" id="GO:0006096">
    <property type="term" value="P:glycolytic process"/>
    <property type="evidence" value="ECO:0000304"/>
    <property type="project" value="TAIR"/>
</dbReference>
<dbReference type="GO" id="GO:0045893">
    <property type="term" value="P:positive regulation of DNA-templated transcription"/>
    <property type="evidence" value="ECO:0000315"/>
    <property type="project" value="UniProtKB"/>
</dbReference>
<dbReference type="GO" id="GO:0046686">
    <property type="term" value="P:response to cadmium ion"/>
    <property type="evidence" value="ECO:0000270"/>
    <property type="project" value="TAIR"/>
</dbReference>
<dbReference type="GO" id="GO:0009408">
    <property type="term" value="P:response to heat"/>
    <property type="evidence" value="ECO:0000315"/>
    <property type="project" value="UniProtKB"/>
</dbReference>
<dbReference type="CDD" id="cd18126">
    <property type="entry name" value="GAPDH_I_C"/>
    <property type="match status" value="1"/>
</dbReference>
<dbReference type="CDD" id="cd05214">
    <property type="entry name" value="GAPDH_I_N"/>
    <property type="match status" value="1"/>
</dbReference>
<dbReference type="FunFam" id="3.30.360.10:FF:000001">
    <property type="entry name" value="Glyceraldehyde-3-phosphate dehydrogenase"/>
    <property type="match status" value="1"/>
</dbReference>
<dbReference type="FunFam" id="3.40.50.720:FF:000020">
    <property type="entry name" value="Glyceraldehyde-3-phosphate dehydrogenase"/>
    <property type="match status" value="1"/>
</dbReference>
<dbReference type="Gene3D" id="3.30.360.10">
    <property type="entry name" value="Dihydrodipicolinate Reductase, domain 2"/>
    <property type="match status" value="1"/>
</dbReference>
<dbReference type="Gene3D" id="3.40.50.720">
    <property type="entry name" value="NAD(P)-binding Rossmann-like Domain"/>
    <property type="match status" value="1"/>
</dbReference>
<dbReference type="InterPro" id="IPR020831">
    <property type="entry name" value="GlycerAld/Erythrose_P_DH"/>
</dbReference>
<dbReference type="InterPro" id="IPR020830">
    <property type="entry name" value="GlycerAld_3-P_DH_AS"/>
</dbReference>
<dbReference type="InterPro" id="IPR020829">
    <property type="entry name" value="GlycerAld_3-P_DH_cat"/>
</dbReference>
<dbReference type="InterPro" id="IPR020828">
    <property type="entry name" value="GlycerAld_3-P_DH_NAD(P)-bd"/>
</dbReference>
<dbReference type="InterPro" id="IPR006424">
    <property type="entry name" value="Glyceraldehyde-3-P_DH_1"/>
</dbReference>
<dbReference type="InterPro" id="IPR036291">
    <property type="entry name" value="NAD(P)-bd_dom_sf"/>
</dbReference>
<dbReference type="NCBIfam" id="TIGR01534">
    <property type="entry name" value="GAPDH-I"/>
    <property type="match status" value="1"/>
</dbReference>
<dbReference type="PANTHER" id="PTHR10836">
    <property type="entry name" value="GLYCERALDEHYDE 3-PHOSPHATE DEHYDROGENASE"/>
    <property type="match status" value="1"/>
</dbReference>
<dbReference type="PANTHER" id="PTHR10836:SF112">
    <property type="entry name" value="GLYCERALDEHYDE-3-PHOSPHATE DEHYDROGENASE GAPC1, CYTOSOLIC-RELATED"/>
    <property type="match status" value="1"/>
</dbReference>
<dbReference type="Pfam" id="PF02800">
    <property type="entry name" value="Gp_dh_C"/>
    <property type="match status" value="1"/>
</dbReference>
<dbReference type="Pfam" id="PF00044">
    <property type="entry name" value="Gp_dh_N"/>
    <property type="match status" value="1"/>
</dbReference>
<dbReference type="PIRSF" id="PIRSF000149">
    <property type="entry name" value="GAP_DH"/>
    <property type="match status" value="1"/>
</dbReference>
<dbReference type="PRINTS" id="PR00078">
    <property type="entry name" value="G3PDHDRGNASE"/>
</dbReference>
<dbReference type="SMART" id="SM00846">
    <property type="entry name" value="Gp_dh_N"/>
    <property type="match status" value="1"/>
</dbReference>
<dbReference type="SUPFAM" id="SSF55347">
    <property type="entry name" value="Glyceraldehyde-3-phosphate dehydrogenase-like, C-terminal domain"/>
    <property type="match status" value="1"/>
</dbReference>
<dbReference type="SUPFAM" id="SSF51735">
    <property type="entry name" value="NAD(P)-binding Rossmann-fold domains"/>
    <property type="match status" value="1"/>
</dbReference>
<dbReference type="PROSITE" id="PS00071">
    <property type="entry name" value="GAPDH"/>
    <property type="match status" value="1"/>
</dbReference>
<keyword id="KW-0025">Alternative splicing</keyword>
<keyword id="KW-0963">Cytoplasm</keyword>
<keyword id="KW-0238">DNA-binding</keyword>
<keyword id="KW-0318">Glutathionylation</keyword>
<keyword id="KW-0324">Glycolysis</keyword>
<keyword id="KW-0520">NAD</keyword>
<keyword id="KW-0539">Nucleus</keyword>
<keyword id="KW-0560">Oxidoreductase</keyword>
<keyword id="KW-1185">Reference proteome</keyword>
<keyword id="KW-0702">S-nitrosylation</keyword>
<protein>
    <recommendedName>
        <fullName evidence="8 9">Glyceraldehyde-3-phosphate dehydrogenase GAPC2, cytosolic</fullName>
        <ecNumber evidence="4 5">1.2.1.12</ecNumber>
    </recommendedName>
    <alternativeName>
        <fullName evidence="8 9">NAD-dependent glyceraldehydephosphate dehydrogenase C subunit 2</fullName>
    </alternativeName>
</protein>
<gene>
    <name evidence="8 9" type="primary">GAPC2</name>
    <name evidence="8" type="synonym">GAPDH</name>
    <name evidence="11" type="ordered locus">At1g13440</name>
    <name evidence="12" type="ORF">T6J4.17</name>
</gene>
<comment type="function">
    <text evidence="2 6 7">Key enzyme in glycolysis that catalyzes the first step of the pathway by converting D-glyceraldehyde 3-phosphate (G3P) into 3-phospho-D-glyceroyl phosphate. Essential for the maintenance of cellular ATP levels and carbohydrate metabolism (By similarity). Binds DNA in vitro (PubMed:22589465). Together with DNA polymerase II subunit B3-1 (DPB3-1) and GAPC1, enhances heat tolerance and promotes the expression of heat-inducible genes (PubMed:32651385).</text>
</comment>
<comment type="catalytic activity">
    <reaction evidence="4 5">
        <text>D-glyceraldehyde 3-phosphate + phosphate + NAD(+) = (2R)-3-phospho-glyceroyl phosphate + NADH + H(+)</text>
        <dbReference type="Rhea" id="RHEA:10300"/>
        <dbReference type="ChEBI" id="CHEBI:15378"/>
        <dbReference type="ChEBI" id="CHEBI:43474"/>
        <dbReference type="ChEBI" id="CHEBI:57540"/>
        <dbReference type="ChEBI" id="CHEBI:57604"/>
        <dbReference type="ChEBI" id="CHEBI:57945"/>
        <dbReference type="ChEBI" id="CHEBI:59776"/>
        <dbReference type="EC" id="1.2.1.12"/>
    </reaction>
</comment>
<comment type="activity regulation">
    <text evidence="5 6">Inhibition by oxidized glutathione (GSSG), S-nitrosoglutathione (GSNO) and hydrogen peroxide.</text>
</comment>
<comment type="pathway">
    <text evidence="5">Carbohydrate degradation; glycolysis; pyruvate from D-glyceraldehyde 3-phosphate: step 1/5.</text>
</comment>
<comment type="subunit">
    <text evidence="2 3 6 7">Homotetramer (By similarity). Interacts with PLDDELTA (By similarity). Binds to DPB3-1/NF-YC10 in response to heat-stress; this interaction promotes DPB3-1/NF-YC10 DNA-binding ability to its target promoter (PubMed:32651385).</text>
</comment>
<comment type="subcellular location">
    <subcellularLocation>
        <location evidence="5 7">Cytoplasm</location>
    </subcellularLocation>
    <subcellularLocation>
        <location evidence="5 7">Nucleus</location>
    </subcellularLocation>
    <text evidence="7">Accumulates in the nucleus under heat stress.</text>
</comment>
<comment type="alternative products">
    <event type="alternative splicing"/>
    <isoform>
        <id>Q9FX54-1</id>
        <name>1</name>
        <sequence type="displayed"/>
    </isoform>
    <text>A number of isoforms are produced. According to EST sequences.</text>
</comment>
<comment type="PTM">
    <text evidence="5">S-glutathionylation at Cys-156 in the presence of oxidized glutathione (GSSG). S-nitrosylation at Cys-156 and Cys-160 in the presence of S-nitrosoglutathione (GSNO) or sodium nitroprusside (SNP). These reactions may be both a protective mechanism against irreversible oxidation and a mean to store inhibited enzyme in a recoverable form.</text>
</comment>
<comment type="disruption phenotype">
    <text evidence="7">The double mutant gapc1 gapc2 has an impaired ability to enhance heat tolerance of seedlings and to promote the expression of heat-inducible genes.</text>
</comment>
<comment type="miscellaneous">
    <text>Plants contain three types of GAPDH: NAD-dependent cytosolic forms which participate in glycolysis, NAD-dependent chloroplastic forms which participate in plastidic glycolysis and NADP-dependent chloroplastic forms which participate in the photosynthetic reductive pentose phosphate pathway (Calvin-Benson cycle). All the forms are encoded by distinct genes.</text>
</comment>
<comment type="similarity">
    <text evidence="10">Belongs to the glyceraldehyde-3-phosphate dehydrogenase family.</text>
</comment>
<accession>Q9FX54</accession>
<accession>B9DGZ4</accession>
<feature type="chain" id="PRO_0000420730" description="Glyceraldehyde-3-phosphate dehydrogenase GAPC2, cytosolic">
    <location>
        <begin position="1"/>
        <end position="338"/>
    </location>
</feature>
<feature type="active site" description="Nucleophile" evidence="2">
    <location>
        <position position="156"/>
    </location>
</feature>
<feature type="binding site" evidence="1">
    <location>
        <begin position="15"/>
        <end position="16"/>
    </location>
    <ligand>
        <name>NAD(+)</name>
        <dbReference type="ChEBI" id="CHEBI:57540"/>
    </ligand>
</feature>
<feature type="binding site" evidence="1">
    <location>
        <position position="37"/>
    </location>
    <ligand>
        <name>NAD(+)</name>
        <dbReference type="ChEBI" id="CHEBI:57540"/>
    </ligand>
</feature>
<feature type="binding site" evidence="1">
    <location>
        <position position="84"/>
    </location>
    <ligand>
        <name>NAD(+)</name>
        <dbReference type="ChEBI" id="CHEBI:57540"/>
    </ligand>
</feature>
<feature type="binding site" evidence="1">
    <location>
        <begin position="155"/>
        <end position="157"/>
    </location>
    <ligand>
        <name>D-glyceraldehyde 3-phosphate</name>
        <dbReference type="ChEBI" id="CHEBI:59776"/>
    </ligand>
</feature>
<feature type="binding site" evidence="1">
    <location>
        <position position="186"/>
    </location>
    <ligand>
        <name>D-glyceraldehyde 3-phosphate</name>
        <dbReference type="ChEBI" id="CHEBI:59776"/>
    </ligand>
</feature>
<feature type="binding site" evidence="1">
    <location>
        <begin position="215"/>
        <end position="216"/>
    </location>
    <ligand>
        <name>D-glyceraldehyde 3-phosphate</name>
        <dbReference type="ChEBI" id="CHEBI:59776"/>
    </ligand>
</feature>
<feature type="binding site" evidence="1">
    <location>
        <position position="238"/>
    </location>
    <ligand>
        <name>D-glyceraldehyde 3-phosphate</name>
        <dbReference type="ChEBI" id="CHEBI:59776"/>
    </ligand>
</feature>
<feature type="binding site" evidence="1">
    <location>
        <position position="320"/>
    </location>
    <ligand>
        <name>NAD(+)</name>
        <dbReference type="ChEBI" id="CHEBI:57540"/>
    </ligand>
</feature>
<feature type="site" description="Activates thiol group during catalysis" evidence="1">
    <location>
        <position position="183"/>
    </location>
</feature>
<feature type="modified residue" description="S-glutathionyl cysteine; transient; alternate" evidence="5">
    <location>
        <position position="156"/>
    </location>
</feature>
<feature type="modified residue" description="S-nitrosocysteine; transient; alternate" evidence="5">
    <location>
        <position position="156"/>
    </location>
</feature>
<feature type="modified residue" description="S-nitrosocysteine; transient" evidence="5">
    <location>
        <position position="160"/>
    </location>
</feature>
<feature type="mutagenesis site" description="In GAPCmut; compromised heat-induced nuclear accumulation leading to impaired ability to enhance heat tolerance; when associated with A-231. In GAPCmut'; impaired DPB3-1/NF-YC10 binding, but normal heat-induced nuclear translocation and impaired ability to enhance heat tolerance; when associated with A-219, A-223 and A-255." evidence="7">
    <original>K</original>
    <variation>A</variation>
    <location>
        <position position="121"/>
    </location>
</feature>
<feature type="mutagenesis site" description="In GAPCmut'; impaired DPB3-1/NF-YC10 binding, but normal heat-induced nuclear translocation and impaired ability to enhance heat tolerance; when associated with A-121, A-223 and A-255." evidence="7">
    <original>K</original>
    <variation>A</variation>
    <location>
        <position position="219"/>
    </location>
</feature>
<feature type="mutagenesis site" description="In GAPCmut'; impaired DPB3-1/NF-YC10 binding, but normal heat-induced nuclear translocation and impaired ability to enhance heat tolerance; when associated with A-121, A-219 and A-255." evidence="7">
    <original>K</original>
    <variation>A</variation>
    <location>
        <position position="223"/>
    </location>
</feature>
<feature type="mutagenesis site" description="In GAPCmut; compromised heat-induced nuclear accumulation leading to impaired ability to enhance heat tolerance; when associated with A-121." evidence="7">
    <original>K</original>
    <variation>A</variation>
    <location>
        <position position="231"/>
    </location>
</feature>
<feature type="mutagenesis site" description="In GAPCmut'; impaired DPB3-1/NF-YC10 binding, but normal heat-induced nuclear translocation and impaired ability to enhance heat tolerance; when associated with A-121, A-219 and A-223." evidence="7">
    <original>K</original>
    <variation>A</variation>
    <location>
        <position position="255"/>
    </location>
</feature>
<feature type="sequence conflict" description="In Ref. 4; BAH20011." evidence="10" ref="4">
    <original>R</original>
    <variation>K</variation>
    <location>
        <position position="22"/>
    </location>
</feature>
<feature type="sequence conflict" description="In Ref. 4; BAH20011." evidence="10" ref="4">
    <original>I</original>
    <variation>V</variation>
    <location>
        <position position="262"/>
    </location>
</feature>
<proteinExistence type="evidence at protein level"/>
<reference key="1">
    <citation type="journal article" date="2000" name="Nature">
        <title>Sequence and analysis of chromosome 1 of the plant Arabidopsis thaliana.</title>
        <authorList>
            <person name="Theologis A."/>
            <person name="Ecker J.R."/>
            <person name="Palm C.J."/>
            <person name="Federspiel N.A."/>
            <person name="Kaul S."/>
            <person name="White O."/>
            <person name="Alonso J."/>
            <person name="Altafi H."/>
            <person name="Araujo R."/>
            <person name="Bowman C.L."/>
            <person name="Brooks S.Y."/>
            <person name="Buehler E."/>
            <person name="Chan A."/>
            <person name="Chao Q."/>
            <person name="Chen H."/>
            <person name="Cheuk R.F."/>
            <person name="Chin C.W."/>
            <person name="Chung M.K."/>
            <person name="Conn L."/>
            <person name="Conway A.B."/>
            <person name="Conway A.R."/>
            <person name="Creasy T.H."/>
            <person name="Dewar K."/>
            <person name="Dunn P."/>
            <person name="Etgu P."/>
            <person name="Feldblyum T.V."/>
            <person name="Feng J.-D."/>
            <person name="Fong B."/>
            <person name="Fujii C.Y."/>
            <person name="Gill J.E."/>
            <person name="Goldsmith A.D."/>
            <person name="Haas B."/>
            <person name="Hansen N.F."/>
            <person name="Hughes B."/>
            <person name="Huizar L."/>
            <person name="Hunter J.L."/>
            <person name="Jenkins J."/>
            <person name="Johnson-Hopson C."/>
            <person name="Khan S."/>
            <person name="Khaykin E."/>
            <person name="Kim C.J."/>
            <person name="Koo H.L."/>
            <person name="Kremenetskaia I."/>
            <person name="Kurtz D.B."/>
            <person name="Kwan A."/>
            <person name="Lam B."/>
            <person name="Langin-Hooper S."/>
            <person name="Lee A."/>
            <person name="Lee J.M."/>
            <person name="Lenz C.A."/>
            <person name="Li J.H."/>
            <person name="Li Y.-P."/>
            <person name="Lin X."/>
            <person name="Liu S.X."/>
            <person name="Liu Z.A."/>
            <person name="Luros J.S."/>
            <person name="Maiti R."/>
            <person name="Marziali A."/>
            <person name="Militscher J."/>
            <person name="Miranda M."/>
            <person name="Nguyen M."/>
            <person name="Nierman W.C."/>
            <person name="Osborne B.I."/>
            <person name="Pai G."/>
            <person name="Peterson J."/>
            <person name="Pham P.K."/>
            <person name="Rizzo M."/>
            <person name="Rooney T."/>
            <person name="Rowley D."/>
            <person name="Sakano H."/>
            <person name="Salzberg S.L."/>
            <person name="Schwartz J.R."/>
            <person name="Shinn P."/>
            <person name="Southwick A.M."/>
            <person name="Sun H."/>
            <person name="Tallon L.J."/>
            <person name="Tambunga G."/>
            <person name="Toriumi M.J."/>
            <person name="Town C.D."/>
            <person name="Utterback T."/>
            <person name="Van Aken S."/>
            <person name="Vaysberg M."/>
            <person name="Vysotskaia V.S."/>
            <person name="Walker M."/>
            <person name="Wu D."/>
            <person name="Yu G."/>
            <person name="Fraser C.M."/>
            <person name="Venter J.C."/>
            <person name="Davis R.W."/>
        </authorList>
    </citation>
    <scope>NUCLEOTIDE SEQUENCE [LARGE SCALE GENOMIC DNA]</scope>
    <source>
        <strain>cv. Columbia</strain>
    </source>
</reference>
<reference key="2">
    <citation type="journal article" date="2017" name="Plant J.">
        <title>Araport11: a complete reannotation of the Arabidopsis thaliana reference genome.</title>
        <authorList>
            <person name="Cheng C.Y."/>
            <person name="Krishnakumar V."/>
            <person name="Chan A.P."/>
            <person name="Thibaud-Nissen F."/>
            <person name="Schobel S."/>
            <person name="Town C.D."/>
        </authorList>
    </citation>
    <scope>GENOME REANNOTATION</scope>
    <source>
        <strain>cv. Columbia</strain>
    </source>
</reference>
<reference key="3">
    <citation type="journal article" date="2003" name="Science">
        <title>Empirical analysis of transcriptional activity in the Arabidopsis genome.</title>
        <authorList>
            <person name="Yamada K."/>
            <person name="Lim J."/>
            <person name="Dale J.M."/>
            <person name="Chen H."/>
            <person name="Shinn P."/>
            <person name="Palm C.J."/>
            <person name="Southwick A.M."/>
            <person name="Wu H.C."/>
            <person name="Kim C.J."/>
            <person name="Nguyen M."/>
            <person name="Pham P.K."/>
            <person name="Cheuk R.F."/>
            <person name="Karlin-Newmann G."/>
            <person name="Liu S.X."/>
            <person name="Lam B."/>
            <person name="Sakano H."/>
            <person name="Wu T."/>
            <person name="Yu G."/>
            <person name="Miranda M."/>
            <person name="Quach H.L."/>
            <person name="Tripp M."/>
            <person name="Chang C.H."/>
            <person name="Lee J.M."/>
            <person name="Toriumi M.J."/>
            <person name="Chan M.M."/>
            <person name="Tang C.C."/>
            <person name="Onodera C.S."/>
            <person name="Deng J.M."/>
            <person name="Akiyama K."/>
            <person name="Ansari Y."/>
            <person name="Arakawa T."/>
            <person name="Banh J."/>
            <person name="Banno F."/>
            <person name="Bowser L."/>
            <person name="Brooks S.Y."/>
            <person name="Carninci P."/>
            <person name="Chao Q."/>
            <person name="Choy N."/>
            <person name="Enju A."/>
            <person name="Goldsmith A.D."/>
            <person name="Gurjal M."/>
            <person name="Hansen N.F."/>
            <person name="Hayashizaki Y."/>
            <person name="Johnson-Hopson C."/>
            <person name="Hsuan V.W."/>
            <person name="Iida K."/>
            <person name="Karnes M."/>
            <person name="Khan S."/>
            <person name="Koesema E."/>
            <person name="Ishida J."/>
            <person name="Jiang P.X."/>
            <person name="Jones T."/>
            <person name="Kawai J."/>
            <person name="Kamiya A."/>
            <person name="Meyers C."/>
            <person name="Nakajima M."/>
            <person name="Narusaka M."/>
            <person name="Seki M."/>
            <person name="Sakurai T."/>
            <person name="Satou M."/>
            <person name="Tamse R."/>
            <person name="Vaysberg M."/>
            <person name="Wallender E.K."/>
            <person name="Wong C."/>
            <person name="Yamamura Y."/>
            <person name="Yuan S."/>
            <person name="Shinozaki K."/>
            <person name="Davis R.W."/>
            <person name="Theologis A."/>
            <person name="Ecker J.R."/>
        </authorList>
    </citation>
    <scope>NUCLEOTIDE SEQUENCE [LARGE SCALE MRNA]</scope>
    <source>
        <strain>cv. Columbia</strain>
    </source>
</reference>
<reference key="4">
    <citation type="journal article" date="2009" name="DNA Res.">
        <title>Analysis of multiple occurrences of alternative splicing events in Arabidopsis thaliana using novel sequenced full-length cDNAs.</title>
        <authorList>
            <person name="Iida K."/>
            <person name="Fukami-Kobayashi K."/>
            <person name="Toyoda A."/>
            <person name="Sakaki Y."/>
            <person name="Kobayashi M."/>
            <person name="Seki M."/>
            <person name="Shinozaki K."/>
        </authorList>
    </citation>
    <scope>NUCLEOTIDE SEQUENCE [LARGE SCALE MRNA]</scope>
    <source>
        <strain>cv. Columbia</strain>
    </source>
</reference>
<reference key="5">
    <citation type="journal article" date="2008" name="Physiol. Plantarum">
        <title>Regulation of plant cytosolic glyceraldehyde 3-phosphate dehydrogenase isoforms by thiol modifications.</title>
        <authorList>
            <person name="Holtgrefe S."/>
            <person name="Gohlke J."/>
            <person name="Starmann J."/>
            <person name="Druce S."/>
            <person name="Klocke S."/>
            <person name="Altmann B."/>
            <person name="Wojtera J."/>
            <person name="Lindermayr C."/>
            <person name="Scheibe R."/>
        </authorList>
    </citation>
    <scope>CATALYTIC ACTIVITY</scope>
    <scope>ACTIVITY REGULATION</scope>
    <scope>SUBCELLULAR LOCATION</scope>
    <scope>GLUTATHIONYLATION AT CYS-156</scope>
    <scope>S-NITROSYLATION AT CYS-156 AND CYS-160</scope>
    <scope>PATHWAY</scope>
</reference>
<reference key="6">
    <citation type="journal article" date="2009" name="J. Proteomics">
        <title>Phosphoproteomic analysis of nuclei-enriched fractions from Arabidopsis thaliana.</title>
        <authorList>
            <person name="Jones A.M.E."/>
            <person name="MacLean D."/>
            <person name="Studholme D.J."/>
            <person name="Serna-Sanz A."/>
            <person name="Andreasson E."/>
            <person name="Rathjen J.P."/>
            <person name="Peck S.C."/>
        </authorList>
    </citation>
    <scope>IDENTIFICATION BY MASS SPECTROMETRY [LARGE SCALE ANALYSIS]</scope>
    <source>
        <strain>cv. Columbia</strain>
    </source>
</reference>
<reference key="7">
    <citation type="journal article" date="2012" name="Plant Cell">
        <title>Cytosolic glyceraldehyde-3-phosphate dehydrogenases interact with phospholipase Ddelta to transduce hydrogen peroxide signals in the Arabidopsis response to stress.</title>
        <authorList>
            <person name="Guo L."/>
            <person name="Devaiah S.P."/>
            <person name="Narasimhan R."/>
            <person name="Pan X."/>
            <person name="Zhang Y."/>
            <person name="Zhang W."/>
            <person name="Wang X."/>
        </authorList>
    </citation>
    <scope>FUNCTION</scope>
    <scope>ACTIVITY REGULATION</scope>
    <scope>INTERACTION WITH PLDDELTA</scope>
</reference>
<reference key="8">
    <citation type="journal article" date="2020" name="Nat. Commun.">
        <title>Nuclear moonlighting of cytosolic glyceraldehyde-3-phosphate dehydrogenase regulates Arabidopsis response to heat stress.</title>
        <authorList>
            <person name="Kim S.-C."/>
            <person name="Guo L."/>
            <person name="Wang X."/>
        </authorList>
    </citation>
    <scope>FUNCTION</scope>
    <scope>DISRUPTION PHENOTYPE</scope>
    <scope>MUTAGENESIS OF LYS-121; LYS-219; LYS-223; LYS-231 AND LYS-255</scope>
    <scope>INTERACTION WITH DPB3-1</scope>
    <scope>SUBCELLULAR LOCATION</scope>
    <source>
        <strain>cv. Columbia</strain>
    </source>
</reference>
<sequence>MADKKIRIGINGFGRIGRLVARVVLQRDDVELVAVNDPFITTEYMTYMFKYDSVHGQWKHHELKVKDDKTLLFGEKPVTVFGIRNPEDIPWGEAGADFVVESTGVFTDKDKAAAHLKGGAKKVVISAPSKDAPMFVVGVNEHEYKSDLDIVSNASCTTNCLAPLAKVINDRFGIVEGLMTTVHSITATQKTVDGPSMKDWRGGRAASFNIIPSSTGAAKAVGKVLPSLNGKLTGMSFRVPTVDVSVVDLTVRLEKAATYDEIKKAIKEESEGKMKGILGYTEDDVVSTDFVGDNRSSIFDAKAGIALSDKFVKLVSWYDNEWGYSSRVVDLIVHMSKA</sequence>
<name>G3PC2_ARATH</name>